<evidence type="ECO:0000255" key="1">
    <source>
        <dbReference type="HAMAP-Rule" id="MF_00265"/>
    </source>
</evidence>
<feature type="chain" id="PRO_0000103940" description="VapC ribonuclease Mb2033">
    <location>
        <begin position="1"/>
        <end position="132"/>
    </location>
</feature>
<feature type="domain" description="PINc" evidence="1">
    <location>
        <begin position="1"/>
        <end position="121"/>
    </location>
</feature>
<feature type="binding site" evidence="1">
    <location>
        <position position="4"/>
    </location>
    <ligand>
        <name>Mg(2+)</name>
        <dbReference type="ChEBI" id="CHEBI:18420"/>
    </ligand>
</feature>
<feature type="binding site" evidence="1">
    <location>
        <position position="96"/>
    </location>
    <ligand>
        <name>Mg(2+)</name>
        <dbReference type="ChEBI" id="CHEBI:18420"/>
    </ligand>
</feature>
<reference key="1">
    <citation type="journal article" date="2003" name="Proc. Natl. Acad. Sci. U.S.A.">
        <title>The complete genome sequence of Mycobacterium bovis.</title>
        <authorList>
            <person name="Garnier T."/>
            <person name="Eiglmeier K."/>
            <person name="Camus J.-C."/>
            <person name="Medina N."/>
            <person name="Mansoor H."/>
            <person name="Pryor M."/>
            <person name="Duthoy S."/>
            <person name="Grondin S."/>
            <person name="Lacroix C."/>
            <person name="Monsempe C."/>
            <person name="Simon S."/>
            <person name="Harris B."/>
            <person name="Atkin R."/>
            <person name="Doggett J."/>
            <person name="Mayes R."/>
            <person name="Keating L."/>
            <person name="Wheeler P.R."/>
            <person name="Parkhill J."/>
            <person name="Barrell B.G."/>
            <person name="Cole S.T."/>
            <person name="Gordon S.V."/>
            <person name="Hewinson R.G."/>
        </authorList>
    </citation>
    <scope>NUCLEOTIDE SEQUENCE [LARGE SCALE GENOMIC DNA]</scope>
    <source>
        <strain>ATCC BAA-935 / AF2122/97</strain>
    </source>
</reference>
<reference key="2">
    <citation type="journal article" date="2017" name="Genome Announc.">
        <title>Updated reference genome sequence and annotation of Mycobacterium bovis AF2122/97.</title>
        <authorList>
            <person name="Malone K.M."/>
            <person name="Farrell D."/>
            <person name="Stuber T.P."/>
            <person name="Schubert O.T."/>
            <person name="Aebersold R."/>
            <person name="Robbe-Austerman S."/>
            <person name="Gordon S.V."/>
        </authorList>
    </citation>
    <scope>NUCLEOTIDE SEQUENCE [LARGE SCALE GENOMIC DNA]</scope>
    <scope>GENOME REANNOTATION</scope>
    <source>
        <strain>ATCC BAA-935 / AF2122/97</strain>
    </source>
</reference>
<proteinExistence type="inferred from homology"/>
<dbReference type="EC" id="3.1.-.-" evidence="1"/>
<dbReference type="EMBL" id="LT708304">
    <property type="protein sequence ID" value="SIU00640.1"/>
    <property type="molecule type" value="Genomic_DNA"/>
</dbReference>
<dbReference type="RefSeq" id="NP_855683.1">
    <property type="nucleotide sequence ID" value="NC_002945.3"/>
</dbReference>
<dbReference type="RefSeq" id="WP_003410075.1">
    <property type="nucleotide sequence ID" value="NC_002945.4"/>
</dbReference>
<dbReference type="SMR" id="P64926"/>
<dbReference type="KEGG" id="mbo:BQ2027_MB2033"/>
<dbReference type="PATRIC" id="fig|233413.5.peg.2233"/>
<dbReference type="Proteomes" id="UP000001419">
    <property type="component" value="Chromosome"/>
</dbReference>
<dbReference type="GO" id="GO:0000287">
    <property type="term" value="F:magnesium ion binding"/>
    <property type="evidence" value="ECO:0007669"/>
    <property type="project" value="UniProtKB-UniRule"/>
</dbReference>
<dbReference type="GO" id="GO:0004540">
    <property type="term" value="F:RNA nuclease activity"/>
    <property type="evidence" value="ECO:0007669"/>
    <property type="project" value="InterPro"/>
</dbReference>
<dbReference type="CDD" id="cd18756">
    <property type="entry name" value="PIN_MtVapC15-VapC11-like"/>
    <property type="match status" value="1"/>
</dbReference>
<dbReference type="FunFam" id="3.40.50.1010:FF:000073">
    <property type="entry name" value="Ribonuclease VapC"/>
    <property type="match status" value="1"/>
</dbReference>
<dbReference type="Gene3D" id="3.40.50.1010">
    <property type="entry name" value="5'-nuclease"/>
    <property type="match status" value="1"/>
</dbReference>
<dbReference type="HAMAP" id="MF_00265">
    <property type="entry name" value="VapC_Nob1"/>
    <property type="match status" value="1"/>
</dbReference>
<dbReference type="InterPro" id="IPR029060">
    <property type="entry name" value="PIN-like_dom_sf"/>
</dbReference>
<dbReference type="InterPro" id="IPR002716">
    <property type="entry name" value="PIN_dom"/>
</dbReference>
<dbReference type="InterPro" id="IPR051749">
    <property type="entry name" value="PINc/VapC_TA_RNase"/>
</dbReference>
<dbReference type="InterPro" id="IPR022907">
    <property type="entry name" value="VapC_family"/>
</dbReference>
<dbReference type="PANTHER" id="PTHR42740">
    <property type="entry name" value="RIBONUCLEASE VAPC3"/>
    <property type="match status" value="1"/>
</dbReference>
<dbReference type="PANTHER" id="PTHR42740:SF1">
    <property type="entry name" value="RIBONUCLEASE VAPC3"/>
    <property type="match status" value="1"/>
</dbReference>
<dbReference type="Pfam" id="PF01850">
    <property type="entry name" value="PIN"/>
    <property type="match status" value="1"/>
</dbReference>
<dbReference type="SUPFAM" id="SSF88723">
    <property type="entry name" value="PIN domain-like"/>
    <property type="match status" value="1"/>
</dbReference>
<organism>
    <name type="scientific">Mycobacterium bovis (strain ATCC BAA-935 / AF2122/97)</name>
    <dbReference type="NCBI Taxonomy" id="233413"/>
    <lineage>
        <taxon>Bacteria</taxon>
        <taxon>Bacillati</taxon>
        <taxon>Actinomycetota</taxon>
        <taxon>Actinomycetes</taxon>
        <taxon>Mycobacteriales</taxon>
        <taxon>Mycobacteriaceae</taxon>
        <taxon>Mycobacterium</taxon>
        <taxon>Mycobacterium tuberculosis complex</taxon>
    </lineage>
</organism>
<keyword id="KW-0378">Hydrolase</keyword>
<keyword id="KW-0460">Magnesium</keyword>
<keyword id="KW-0479">Metal-binding</keyword>
<keyword id="KW-0540">Nuclease</keyword>
<keyword id="KW-1185">Reference proteome</keyword>
<keyword id="KW-1277">Toxin-antitoxin system</keyword>
<comment type="function">
    <text evidence="1">Toxic component of a type II toxin-antitoxin (TA) system. An RNase.</text>
</comment>
<comment type="cofactor">
    <cofactor evidence="1">
        <name>Mg(2+)</name>
        <dbReference type="ChEBI" id="CHEBI:18420"/>
    </cofactor>
</comment>
<comment type="similarity">
    <text evidence="1">Belongs to the PINc/VapC protein family.</text>
</comment>
<gene>
    <name type="ordered locus">BQ2027_MB2033</name>
</gene>
<protein>
    <recommendedName>
        <fullName>VapC ribonuclease Mb2033</fullName>
        <shortName>RNase Mb2033</shortName>
        <ecNumber evidence="1">3.1.-.-</ecNumber>
    </recommendedName>
    <alternativeName>
        <fullName>Toxin Mb2033</fullName>
    </alternativeName>
</protein>
<accession>P64926</accession>
<accession>A0A1R3Y003</accession>
<accession>Q10847</accession>
<accession>X2BJV0</accession>
<sequence>MIVDTSVWIAYLSTSESLASRWLADRIAADSTVIVPEVVMMELLIGKTDEDTAALRRRLLQRFAIEPLAPVRDAEDAAAIHRRCRRGGDTVRSLIDCQVAAMALRIGVAVAHRDRDYEAIRTHCGLRTEPLF</sequence>
<name>VAPC7_MYCBO</name>